<accession>B7GUX7</accession>
<feature type="chain" id="PRO_1000205463" description="DNA replication and repair protein RecF">
    <location>
        <begin position="1"/>
        <end position="360"/>
    </location>
</feature>
<feature type="binding site" evidence="1">
    <location>
        <begin position="30"/>
        <end position="37"/>
    </location>
    <ligand>
        <name>ATP</name>
        <dbReference type="ChEBI" id="CHEBI:30616"/>
    </ligand>
</feature>
<protein>
    <recommendedName>
        <fullName evidence="1">DNA replication and repair protein RecF</fullName>
    </recommendedName>
</protein>
<gene>
    <name evidence="1" type="primary">recF</name>
    <name type="ordered locus">ABBFA_000003</name>
</gene>
<sequence length="360" mass="41144">MHLTRLNIERVRNLKTVALHGLQPFNVFYGANGSGKTSILEAIHLLATGRSFRTHIPKNYIQYEADDAIVFAQSATEKIGMQKLASGEQLMKVNGDTVATQGQLAKLLPLQHIDPQSTDIIDHGAKPRRQLLDWLMFHVEPEFYFAWQYYSRALKQRNTLLKTRRNLSLADLEPWNKMLSDYGEILHSQRLSIVEQWNVYFQNDLSQLLPDLEIELEYSPGFHTEQGLMQDLLNQHQKDIERRYTEYGPHRADLRLKTPFGHADDVLSRGQKKLLIIALKLSQIAMLHASNKETVVLLDDLTAELDLTAQQRLIERLSQLGSQVFMTTLDHASVKKHLHDLSISYQLFSVESGQVSLAAP</sequence>
<organism>
    <name type="scientific">Acinetobacter baumannii (strain AB307-0294)</name>
    <dbReference type="NCBI Taxonomy" id="557600"/>
    <lineage>
        <taxon>Bacteria</taxon>
        <taxon>Pseudomonadati</taxon>
        <taxon>Pseudomonadota</taxon>
        <taxon>Gammaproteobacteria</taxon>
        <taxon>Moraxellales</taxon>
        <taxon>Moraxellaceae</taxon>
        <taxon>Acinetobacter</taxon>
        <taxon>Acinetobacter calcoaceticus/baumannii complex</taxon>
    </lineage>
</organism>
<reference key="1">
    <citation type="journal article" date="2008" name="J. Bacteriol.">
        <title>Comparative genome sequence analysis of multidrug-resistant Acinetobacter baumannii.</title>
        <authorList>
            <person name="Adams M.D."/>
            <person name="Goglin K."/>
            <person name="Molyneaux N."/>
            <person name="Hujer K.M."/>
            <person name="Lavender H."/>
            <person name="Jamison J.J."/>
            <person name="MacDonald I.J."/>
            <person name="Martin K.M."/>
            <person name="Russo T."/>
            <person name="Campagnari A.A."/>
            <person name="Hujer A.M."/>
            <person name="Bonomo R.A."/>
            <person name="Gill S.R."/>
        </authorList>
    </citation>
    <scope>NUCLEOTIDE SEQUENCE [LARGE SCALE GENOMIC DNA]</scope>
    <source>
        <strain>AB307-0294</strain>
    </source>
</reference>
<comment type="function">
    <text evidence="1">The RecF protein is involved in DNA metabolism; it is required for DNA replication and normal SOS inducibility. RecF binds preferentially to single-stranded, linear DNA. It also seems to bind ATP.</text>
</comment>
<comment type="subcellular location">
    <subcellularLocation>
        <location evidence="1">Cytoplasm</location>
    </subcellularLocation>
</comment>
<comment type="similarity">
    <text evidence="1">Belongs to the RecF family.</text>
</comment>
<dbReference type="EMBL" id="CP001172">
    <property type="protein sequence ID" value="ACJ57476.1"/>
    <property type="molecule type" value="Genomic_DNA"/>
</dbReference>
<dbReference type="RefSeq" id="WP_000550807.1">
    <property type="nucleotide sequence ID" value="NZ_CP001172.1"/>
</dbReference>
<dbReference type="SMR" id="B7GUX7"/>
<dbReference type="GeneID" id="92891938"/>
<dbReference type="HOGENOM" id="CLU_040267_0_0_6"/>
<dbReference type="Proteomes" id="UP000006924">
    <property type="component" value="Chromosome"/>
</dbReference>
<dbReference type="GO" id="GO:0005737">
    <property type="term" value="C:cytoplasm"/>
    <property type="evidence" value="ECO:0007669"/>
    <property type="project" value="UniProtKB-SubCell"/>
</dbReference>
<dbReference type="GO" id="GO:0005524">
    <property type="term" value="F:ATP binding"/>
    <property type="evidence" value="ECO:0007669"/>
    <property type="project" value="UniProtKB-UniRule"/>
</dbReference>
<dbReference type="GO" id="GO:0003697">
    <property type="term" value="F:single-stranded DNA binding"/>
    <property type="evidence" value="ECO:0007669"/>
    <property type="project" value="UniProtKB-UniRule"/>
</dbReference>
<dbReference type="GO" id="GO:0006260">
    <property type="term" value="P:DNA replication"/>
    <property type="evidence" value="ECO:0007669"/>
    <property type="project" value="UniProtKB-UniRule"/>
</dbReference>
<dbReference type="GO" id="GO:0000731">
    <property type="term" value="P:DNA synthesis involved in DNA repair"/>
    <property type="evidence" value="ECO:0007669"/>
    <property type="project" value="TreeGrafter"/>
</dbReference>
<dbReference type="GO" id="GO:0006302">
    <property type="term" value="P:double-strand break repair"/>
    <property type="evidence" value="ECO:0007669"/>
    <property type="project" value="TreeGrafter"/>
</dbReference>
<dbReference type="GO" id="GO:0009432">
    <property type="term" value="P:SOS response"/>
    <property type="evidence" value="ECO:0007669"/>
    <property type="project" value="UniProtKB-UniRule"/>
</dbReference>
<dbReference type="Gene3D" id="3.40.50.300">
    <property type="entry name" value="P-loop containing nucleotide triphosphate hydrolases"/>
    <property type="match status" value="1"/>
</dbReference>
<dbReference type="Gene3D" id="1.20.1050.90">
    <property type="entry name" value="RecF/RecN/SMC, N-terminal domain"/>
    <property type="match status" value="1"/>
</dbReference>
<dbReference type="HAMAP" id="MF_00365">
    <property type="entry name" value="RecF"/>
    <property type="match status" value="1"/>
</dbReference>
<dbReference type="InterPro" id="IPR001238">
    <property type="entry name" value="DNA-binding_RecF"/>
</dbReference>
<dbReference type="InterPro" id="IPR027417">
    <property type="entry name" value="P-loop_NTPase"/>
</dbReference>
<dbReference type="InterPro" id="IPR003395">
    <property type="entry name" value="RecF/RecN/SMC_N"/>
</dbReference>
<dbReference type="InterPro" id="IPR042174">
    <property type="entry name" value="RecF_2"/>
</dbReference>
<dbReference type="NCBIfam" id="TIGR00611">
    <property type="entry name" value="recf"/>
    <property type="match status" value="1"/>
</dbReference>
<dbReference type="PANTHER" id="PTHR32182">
    <property type="entry name" value="DNA REPLICATION AND REPAIR PROTEIN RECF"/>
    <property type="match status" value="1"/>
</dbReference>
<dbReference type="PANTHER" id="PTHR32182:SF0">
    <property type="entry name" value="DNA REPLICATION AND REPAIR PROTEIN RECF"/>
    <property type="match status" value="1"/>
</dbReference>
<dbReference type="Pfam" id="PF02463">
    <property type="entry name" value="SMC_N"/>
    <property type="match status" value="1"/>
</dbReference>
<dbReference type="SUPFAM" id="SSF52540">
    <property type="entry name" value="P-loop containing nucleoside triphosphate hydrolases"/>
    <property type="match status" value="1"/>
</dbReference>
<keyword id="KW-0067">ATP-binding</keyword>
<keyword id="KW-0963">Cytoplasm</keyword>
<keyword id="KW-0227">DNA damage</keyword>
<keyword id="KW-0234">DNA repair</keyword>
<keyword id="KW-0235">DNA replication</keyword>
<keyword id="KW-0238">DNA-binding</keyword>
<keyword id="KW-0547">Nucleotide-binding</keyword>
<keyword id="KW-0742">SOS response</keyword>
<name>RECF_ACIB3</name>
<proteinExistence type="inferred from homology"/>
<evidence type="ECO:0000255" key="1">
    <source>
        <dbReference type="HAMAP-Rule" id="MF_00365"/>
    </source>
</evidence>